<name>CS012_DANRE</name>
<sequence>MPPHVDDVMKLCCELSANQQVKTAVKQSGKGAAAAGGLAFAGGLIGGPLGIAVGGAVGGLLGCWMKSGQFKPLPQVIMELTPDQQARLYEDIVAILGSITWTDVAQLTALVMGNASLQQQVTAALLSYIHKELQAEVHYID</sequence>
<gene>
    <name type="ORF">si:ch211-238a12.2</name>
    <name type="ORF">zgc:112052</name>
</gene>
<comment type="subcellular location">
    <subcellularLocation>
        <location evidence="1">Mitochondrion</location>
    </subcellularLocation>
    <subcellularLocation>
        <location evidence="1">Mitochondrion membrane</location>
        <topology evidence="2">Single-pass membrane protein</topology>
    </subcellularLocation>
    <subcellularLocation>
        <location evidence="1">Endoplasmic reticulum</location>
    </subcellularLocation>
    <subcellularLocation>
        <location evidence="1">Cytoplasm</location>
        <location evidence="1">Cytosol</location>
    </subcellularLocation>
    <text evidence="1">In response to oxidative stress, relocates to the cytosol forming aggregates that partially co-localize with mitochondria.</text>
</comment>
<comment type="similarity">
    <text evidence="3">Belongs to the C19orf12 family.</text>
</comment>
<evidence type="ECO:0000250" key="1">
    <source>
        <dbReference type="UniProtKB" id="Q9NSK7"/>
    </source>
</evidence>
<evidence type="ECO:0000255" key="2"/>
<evidence type="ECO:0000305" key="3"/>
<dbReference type="EMBL" id="CR381668">
    <property type="protein sequence ID" value="CAK04653.1"/>
    <property type="molecule type" value="Genomic_DNA"/>
</dbReference>
<dbReference type="EMBL" id="BC093171">
    <property type="protein sequence ID" value="AAH93171.1"/>
    <property type="molecule type" value="mRNA"/>
</dbReference>
<dbReference type="FunCoup" id="Q1L990">
    <property type="interactions" value="448"/>
</dbReference>
<dbReference type="STRING" id="7955.ENSDARP00000076250"/>
<dbReference type="PaxDb" id="7955-ENSDARP00000076250"/>
<dbReference type="Ensembl" id="ENSDART00000190389">
    <property type="protein sequence ID" value="ENSDARP00000155298"/>
    <property type="gene ID" value="ENSDARG00000114095"/>
</dbReference>
<dbReference type="AGR" id="ZFIN:ZDB-GENE-050417-151"/>
<dbReference type="ZFIN" id="ZDB-GENE-050417-151">
    <property type="gene designation" value="zgc:112052"/>
</dbReference>
<dbReference type="eggNOG" id="ENOG502RZQC">
    <property type="taxonomic scope" value="Eukaryota"/>
</dbReference>
<dbReference type="InParanoid" id="Q1L990"/>
<dbReference type="OMA" id="TTIREMK"/>
<dbReference type="PhylomeDB" id="Q1L990"/>
<dbReference type="PRO" id="PR:Q1L990"/>
<dbReference type="Proteomes" id="UP000000437">
    <property type="component" value="Unplaced"/>
</dbReference>
<dbReference type="Bgee" id="ENSDARG00000114095">
    <property type="expression patterns" value="Expressed in musculature of body and 25 other cell types or tissues"/>
</dbReference>
<dbReference type="GO" id="GO:0005829">
    <property type="term" value="C:cytosol"/>
    <property type="evidence" value="ECO:0007669"/>
    <property type="project" value="UniProtKB-SubCell"/>
</dbReference>
<dbReference type="GO" id="GO:0005783">
    <property type="term" value="C:endoplasmic reticulum"/>
    <property type="evidence" value="ECO:0000250"/>
    <property type="project" value="UniProtKB"/>
</dbReference>
<dbReference type="GO" id="GO:0031966">
    <property type="term" value="C:mitochondrial membrane"/>
    <property type="evidence" value="ECO:0000250"/>
    <property type="project" value="UniProtKB"/>
</dbReference>
<dbReference type="GO" id="GO:0005739">
    <property type="term" value="C:mitochondrion"/>
    <property type="evidence" value="ECO:0000250"/>
    <property type="project" value="UniProtKB"/>
</dbReference>
<dbReference type="GO" id="GO:0048666">
    <property type="term" value="P:neuron development"/>
    <property type="evidence" value="ECO:0000315"/>
    <property type="project" value="ZFIN"/>
</dbReference>
<dbReference type="GO" id="GO:0048741">
    <property type="term" value="P:skeletal muscle fiber development"/>
    <property type="evidence" value="ECO:0000315"/>
    <property type="project" value="ZFIN"/>
</dbReference>
<dbReference type="InterPro" id="IPR033369">
    <property type="entry name" value="C19orf12"/>
</dbReference>
<dbReference type="PANTHER" id="PTHR31493">
    <property type="entry name" value="NAZO FAMILY MEMBER"/>
    <property type="match status" value="1"/>
</dbReference>
<dbReference type="PANTHER" id="PTHR31493:SF1">
    <property type="entry name" value="PROTEIN C19ORF12"/>
    <property type="match status" value="1"/>
</dbReference>
<dbReference type="Pfam" id="PF20721">
    <property type="entry name" value="C19orf12"/>
    <property type="match status" value="1"/>
</dbReference>
<reference key="1">
    <citation type="journal article" date="2013" name="Nature">
        <title>The zebrafish reference genome sequence and its relationship to the human genome.</title>
        <authorList>
            <person name="Howe K."/>
            <person name="Clark M.D."/>
            <person name="Torroja C.F."/>
            <person name="Torrance J."/>
            <person name="Berthelot C."/>
            <person name="Muffato M."/>
            <person name="Collins J.E."/>
            <person name="Humphray S."/>
            <person name="McLaren K."/>
            <person name="Matthews L."/>
            <person name="McLaren S."/>
            <person name="Sealy I."/>
            <person name="Caccamo M."/>
            <person name="Churcher C."/>
            <person name="Scott C."/>
            <person name="Barrett J.C."/>
            <person name="Koch R."/>
            <person name="Rauch G.J."/>
            <person name="White S."/>
            <person name="Chow W."/>
            <person name="Kilian B."/>
            <person name="Quintais L.T."/>
            <person name="Guerra-Assuncao J.A."/>
            <person name="Zhou Y."/>
            <person name="Gu Y."/>
            <person name="Yen J."/>
            <person name="Vogel J.H."/>
            <person name="Eyre T."/>
            <person name="Redmond S."/>
            <person name="Banerjee R."/>
            <person name="Chi J."/>
            <person name="Fu B."/>
            <person name="Langley E."/>
            <person name="Maguire S.F."/>
            <person name="Laird G.K."/>
            <person name="Lloyd D."/>
            <person name="Kenyon E."/>
            <person name="Donaldson S."/>
            <person name="Sehra H."/>
            <person name="Almeida-King J."/>
            <person name="Loveland J."/>
            <person name="Trevanion S."/>
            <person name="Jones M."/>
            <person name="Quail M."/>
            <person name="Willey D."/>
            <person name="Hunt A."/>
            <person name="Burton J."/>
            <person name="Sims S."/>
            <person name="McLay K."/>
            <person name="Plumb B."/>
            <person name="Davis J."/>
            <person name="Clee C."/>
            <person name="Oliver K."/>
            <person name="Clark R."/>
            <person name="Riddle C."/>
            <person name="Elliot D."/>
            <person name="Threadgold G."/>
            <person name="Harden G."/>
            <person name="Ware D."/>
            <person name="Begum S."/>
            <person name="Mortimore B."/>
            <person name="Kerry G."/>
            <person name="Heath P."/>
            <person name="Phillimore B."/>
            <person name="Tracey A."/>
            <person name="Corby N."/>
            <person name="Dunn M."/>
            <person name="Johnson C."/>
            <person name="Wood J."/>
            <person name="Clark S."/>
            <person name="Pelan S."/>
            <person name="Griffiths G."/>
            <person name="Smith M."/>
            <person name="Glithero R."/>
            <person name="Howden P."/>
            <person name="Barker N."/>
            <person name="Lloyd C."/>
            <person name="Stevens C."/>
            <person name="Harley J."/>
            <person name="Holt K."/>
            <person name="Panagiotidis G."/>
            <person name="Lovell J."/>
            <person name="Beasley H."/>
            <person name="Henderson C."/>
            <person name="Gordon D."/>
            <person name="Auger K."/>
            <person name="Wright D."/>
            <person name="Collins J."/>
            <person name="Raisen C."/>
            <person name="Dyer L."/>
            <person name="Leung K."/>
            <person name="Robertson L."/>
            <person name="Ambridge K."/>
            <person name="Leongamornlert D."/>
            <person name="McGuire S."/>
            <person name="Gilderthorp R."/>
            <person name="Griffiths C."/>
            <person name="Manthravadi D."/>
            <person name="Nichol S."/>
            <person name="Barker G."/>
            <person name="Whitehead S."/>
            <person name="Kay M."/>
            <person name="Brown J."/>
            <person name="Murnane C."/>
            <person name="Gray E."/>
            <person name="Humphries M."/>
            <person name="Sycamore N."/>
            <person name="Barker D."/>
            <person name="Saunders D."/>
            <person name="Wallis J."/>
            <person name="Babbage A."/>
            <person name="Hammond S."/>
            <person name="Mashreghi-Mohammadi M."/>
            <person name="Barr L."/>
            <person name="Martin S."/>
            <person name="Wray P."/>
            <person name="Ellington A."/>
            <person name="Matthews N."/>
            <person name="Ellwood M."/>
            <person name="Woodmansey R."/>
            <person name="Clark G."/>
            <person name="Cooper J."/>
            <person name="Tromans A."/>
            <person name="Grafham D."/>
            <person name="Skuce C."/>
            <person name="Pandian R."/>
            <person name="Andrews R."/>
            <person name="Harrison E."/>
            <person name="Kimberley A."/>
            <person name="Garnett J."/>
            <person name="Fosker N."/>
            <person name="Hall R."/>
            <person name="Garner P."/>
            <person name="Kelly D."/>
            <person name="Bird C."/>
            <person name="Palmer S."/>
            <person name="Gehring I."/>
            <person name="Berger A."/>
            <person name="Dooley C.M."/>
            <person name="Ersan-Urun Z."/>
            <person name="Eser C."/>
            <person name="Geiger H."/>
            <person name="Geisler M."/>
            <person name="Karotki L."/>
            <person name="Kirn A."/>
            <person name="Konantz J."/>
            <person name="Konantz M."/>
            <person name="Oberlander M."/>
            <person name="Rudolph-Geiger S."/>
            <person name="Teucke M."/>
            <person name="Lanz C."/>
            <person name="Raddatz G."/>
            <person name="Osoegawa K."/>
            <person name="Zhu B."/>
            <person name="Rapp A."/>
            <person name="Widaa S."/>
            <person name="Langford C."/>
            <person name="Yang F."/>
            <person name="Schuster S.C."/>
            <person name="Carter N.P."/>
            <person name="Harrow J."/>
            <person name="Ning Z."/>
            <person name="Herrero J."/>
            <person name="Searle S.M."/>
            <person name="Enright A."/>
            <person name="Geisler R."/>
            <person name="Plasterk R.H."/>
            <person name="Lee C."/>
            <person name="Westerfield M."/>
            <person name="de Jong P.J."/>
            <person name="Zon L.I."/>
            <person name="Postlethwait J.H."/>
            <person name="Nusslein-Volhard C."/>
            <person name="Hubbard T.J."/>
            <person name="Roest Crollius H."/>
            <person name="Rogers J."/>
            <person name="Stemple D.L."/>
        </authorList>
    </citation>
    <scope>NUCLEOTIDE SEQUENCE [LARGE SCALE GENOMIC DNA]</scope>
    <source>
        <strain>Tuebingen</strain>
    </source>
</reference>
<reference key="2">
    <citation type="submission" date="2005-04" db="EMBL/GenBank/DDBJ databases">
        <authorList>
            <consortium name="NIH - Zebrafish Gene Collection (ZGC) project"/>
        </authorList>
    </citation>
    <scope>NUCLEOTIDE SEQUENCE [LARGE SCALE MRNA]</scope>
    <source>
        <tissue>Olfactory epithelium</tissue>
    </source>
</reference>
<feature type="chain" id="PRO_0000296664" description="Protein C19orf12 homolog">
    <location>
        <begin position="1"/>
        <end position="141"/>
    </location>
</feature>
<feature type="transmembrane region" description="Helical" evidence="2">
    <location>
        <begin position="37"/>
        <end position="57"/>
    </location>
</feature>
<feature type="sequence conflict" description="In Ref. 2; AAH93171." evidence="3" ref="2">
    <original>K</original>
    <variation>T</variation>
    <location>
        <position position="66"/>
    </location>
</feature>
<feature type="sequence conflict" description="In Ref. 2; AAH93171." evidence="3" ref="2">
    <original>G</original>
    <variation>S</variation>
    <location>
        <position position="97"/>
    </location>
</feature>
<accession>Q1L990</accession>
<accession>Q567H5</accession>
<protein>
    <recommendedName>
        <fullName>Protein C19orf12 homolog</fullName>
    </recommendedName>
</protein>
<proteinExistence type="evidence at transcript level"/>
<keyword id="KW-0963">Cytoplasm</keyword>
<keyword id="KW-0256">Endoplasmic reticulum</keyword>
<keyword id="KW-0472">Membrane</keyword>
<keyword id="KW-0496">Mitochondrion</keyword>
<keyword id="KW-1185">Reference proteome</keyword>
<keyword id="KW-0812">Transmembrane</keyword>
<keyword id="KW-1133">Transmembrane helix</keyword>
<organism>
    <name type="scientific">Danio rerio</name>
    <name type="common">Zebrafish</name>
    <name type="synonym">Brachydanio rerio</name>
    <dbReference type="NCBI Taxonomy" id="7955"/>
    <lineage>
        <taxon>Eukaryota</taxon>
        <taxon>Metazoa</taxon>
        <taxon>Chordata</taxon>
        <taxon>Craniata</taxon>
        <taxon>Vertebrata</taxon>
        <taxon>Euteleostomi</taxon>
        <taxon>Actinopterygii</taxon>
        <taxon>Neopterygii</taxon>
        <taxon>Teleostei</taxon>
        <taxon>Ostariophysi</taxon>
        <taxon>Cypriniformes</taxon>
        <taxon>Danionidae</taxon>
        <taxon>Danioninae</taxon>
        <taxon>Danio</taxon>
    </lineage>
</organism>